<name>RSMG_TRIEI</name>
<organism>
    <name type="scientific">Trichodesmium erythraeum (strain IMS101)</name>
    <dbReference type="NCBI Taxonomy" id="203124"/>
    <lineage>
        <taxon>Bacteria</taxon>
        <taxon>Bacillati</taxon>
        <taxon>Cyanobacteriota</taxon>
        <taxon>Cyanophyceae</taxon>
        <taxon>Oscillatoriophycideae</taxon>
        <taxon>Oscillatoriales</taxon>
        <taxon>Microcoleaceae</taxon>
        <taxon>Trichodesmium</taxon>
    </lineage>
</organism>
<comment type="function">
    <text evidence="1">Specifically methylates the N7 position of a guanine in 16S rRNA.</text>
</comment>
<comment type="subcellular location">
    <subcellularLocation>
        <location evidence="1">Cytoplasm</location>
    </subcellularLocation>
</comment>
<comment type="similarity">
    <text evidence="1">Belongs to the methyltransferase superfamily. RNA methyltransferase RsmG family.</text>
</comment>
<reference key="1">
    <citation type="journal article" date="2015" name="Proc. Natl. Acad. Sci. U.S.A.">
        <title>Trichodesmium genome maintains abundant, widespread noncoding DNA in situ, despite oligotrophic lifestyle.</title>
        <authorList>
            <person name="Walworth N."/>
            <person name="Pfreundt U."/>
            <person name="Nelson W.C."/>
            <person name="Mincer T."/>
            <person name="Heidelberg J.F."/>
            <person name="Fu F."/>
            <person name="Waterbury J.B."/>
            <person name="Glavina del Rio T."/>
            <person name="Goodwin L."/>
            <person name="Kyrpides N.C."/>
            <person name="Land M.L."/>
            <person name="Woyke T."/>
            <person name="Hutchins D.A."/>
            <person name="Hess W.R."/>
            <person name="Webb E.A."/>
        </authorList>
    </citation>
    <scope>NUCLEOTIDE SEQUENCE [LARGE SCALE GENOMIC DNA]</scope>
    <source>
        <strain>IMS101</strain>
    </source>
</reference>
<dbReference type="EC" id="2.1.1.-" evidence="1"/>
<dbReference type="EMBL" id="CP000393">
    <property type="protein sequence ID" value="ABG52820.1"/>
    <property type="molecule type" value="Genomic_DNA"/>
</dbReference>
<dbReference type="RefSeq" id="WP_011613150.1">
    <property type="nucleotide sequence ID" value="NC_008312.1"/>
</dbReference>
<dbReference type="SMR" id="Q10Y54"/>
<dbReference type="STRING" id="203124.Tery_3772"/>
<dbReference type="KEGG" id="ter:Tery_3772"/>
<dbReference type="eggNOG" id="COG0357">
    <property type="taxonomic scope" value="Bacteria"/>
</dbReference>
<dbReference type="HOGENOM" id="CLU_065341_0_2_3"/>
<dbReference type="OrthoDB" id="9808773at2"/>
<dbReference type="GO" id="GO:0005829">
    <property type="term" value="C:cytosol"/>
    <property type="evidence" value="ECO:0007669"/>
    <property type="project" value="TreeGrafter"/>
</dbReference>
<dbReference type="GO" id="GO:0070043">
    <property type="term" value="F:rRNA (guanine-N7-)-methyltransferase activity"/>
    <property type="evidence" value="ECO:0007669"/>
    <property type="project" value="UniProtKB-UniRule"/>
</dbReference>
<dbReference type="FunFam" id="3.40.50.150:FF:000041">
    <property type="entry name" value="Ribosomal RNA small subunit methyltransferase G"/>
    <property type="match status" value="1"/>
</dbReference>
<dbReference type="Gene3D" id="3.40.50.150">
    <property type="entry name" value="Vaccinia Virus protein VP39"/>
    <property type="match status" value="1"/>
</dbReference>
<dbReference type="HAMAP" id="MF_00074">
    <property type="entry name" value="16SrRNA_methyltr_G"/>
    <property type="match status" value="1"/>
</dbReference>
<dbReference type="InterPro" id="IPR003682">
    <property type="entry name" value="rRNA_ssu_MeTfrase_G"/>
</dbReference>
<dbReference type="InterPro" id="IPR029063">
    <property type="entry name" value="SAM-dependent_MTases_sf"/>
</dbReference>
<dbReference type="NCBIfam" id="TIGR00138">
    <property type="entry name" value="rsmG_gidB"/>
    <property type="match status" value="1"/>
</dbReference>
<dbReference type="PANTHER" id="PTHR31760">
    <property type="entry name" value="S-ADENOSYL-L-METHIONINE-DEPENDENT METHYLTRANSFERASES SUPERFAMILY PROTEIN"/>
    <property type="match status" value="1"/>
</dbReference>
<dbReference type="PANTHER" id="PTHR31760:SF0">
    <property type="entry name" value="S-ADENOSYL-L-METHIONINE-DEPENDENT METHYLTRANSFERASES SUPERFAMILY PROTEIN"/>
    <property type="match status" value="1"/>
</dbReference>
<dbReference type="Pfam" id="PF02527">
    <property type="entry name" value="GidB"/>
    <property type="match status" value="1"/>
</dbReference>
<dbReference type="PIRSF" id="PIRSF003078">
    <property type="entry name" value="GidB"/>
    <property type="match status" value="1"/>
</dbReference>
<dbReference type="SUPFAM" id="SSF53335">
    <property type="entry name" value="S-adenosyl-L-methionine-dependent methyltransferases"/>
    <property type="match status" value="1"/>
</dbReference>
<evidence type="ECO:0000255" key="1">
    <source>
        <dbReference type="HAMAP-Rule" id="MF_00074"/>
    </source>
</evidence>
<gene>
    <name evidence="1" type="primary">rsmG</name>
    <name type="ordered locus">Tery_3772</name>
</gene>
<accession>Q10Y54</accession>
<proteinExistence type="inferred from homology"/>
<feature type="chain" id="PRO_0000335447" description="Ribosomal RNA small subunit methyltransferase G">
    <location>
        <begin position="1"/>
        <end position="255"/>
    </location>
</feature>
<feature type="binding site" evidence="1">
    <location>
        <position position="89"/>
    </location>
    <ligand>
        <name>S-adenosyl-L-methionine</name>
        <dbReference type="ChEBI" id="CHEBI:59789"/>
    </ligand>
</feature>
<feature type="binding site" evidence="1">
    <location>
        <position position="94"/>
    </location>
    <ligand>
        <name>S-adenosyl-L-methionine</name>
        <dbReference type="ChEBI" id="CHEBI:59789"/>
    </ligand>
</feature>
<feature type="binding site" evidence="1">
    <location>
        <begin position="112"/>
        <end position="114"/>
    </location>
    <ligand>
        <name>S-adenosyl-L-methionine</name>
        <dbReference type="ChEBI" id="CHEBI:59789"/>
    </ligand>
</feature>
<feature type="binding site" evidence="1">
    <location>
        <begin position="140"/>
        <end position="141"/>
    </location>
    <ligand>
        <name>S-adenosyl-L-methionine</name>
        <dbReference type="ChEBI" id="CHEBI:59789"/>
    </ligand>
</feature>
<feature type="binding site" evidence="1">
    <location>
        <position position="159"/>
    </location>
    <ligand>
        <name>S-adenosyl-L-methionine</name>
        <dbReference type="ChEBI" id="CHEBI:59789"/>
    </ligand>
</feature>
<keyword id="KW-0963">Cytoplasm</keyword>
<keyword id="KW-0489">Methyltransferase</keyword>
<keyword id="KW-0698">rRNA processing</keyword>
<keyword id="KW-0949">S-adenosyl-L-methionine</keyword>
<keyword id="KW-0808">Transferase</keyword>
<protein>
    <recommendedName>
        <fullName evidence="1">Ribosomal RNA small subunit methyltransferase G</fullName>
        <ecNumber evidence="1">2.1.1.-</ecNumber>
    </recommendedName>
    <alternativeName>
        <fullName evidence="1">16S rRNA 7-methylguanosine methyltransferase</fullName>
        <shortName evidence="1">16S rRNA m7G methyltransferase</shortName>
    </alternativeName>
</protein>
<sequence length="255" mass="29155">MNDNNIQVLPEMSSVWQETLNWQPTVEQKQQFQKLYELIILGNKKLNLTRITKPEEFWEKHLWDSLRGIKFILENKIHWSEEKKVIDIGTGAGFPGLLVAIILPQYAVTLLDSTRKKISFIENILTDLNIKNALTITNRVEQIGRLFKYRETYDIGLLRAVASTVVCAEYALPLLKIGGIAILYRGNITTDEQANLPEVVKLLGGKIERIEEFKTPLSNSIRNCIYLRKVGKTPINYPRSVGVPNQKPLLSLKKI</sequence>